<organism>
    <name type="scientific">Glaesserella parasuis serovar 5 (strain SH0165)</name>
    <name type="common">Haemophilus parasuis</name>
    <dbReference type="NCBI Taxonomy" id="557723"/>
    <lineage>
        <taxon>Bacteria</taxon>
        <taxon>Pseudomonadati</taxon>
        <taxon>Pseudomonadota</taxon>
        <taxon>Gammaproteobacteria</taxon>
        <taxon>Pasteurellales</taxon>
        <taxon>Pasteurellaceae</taxon>
        <taxon>Glaesserella</taxon>
    </lineage>
</organism>
<protein>
    <recommendedName>
        <fullName evidence="1">Cysteine--tRNA ligase</fullName>
        <ecNumber evidence="1">6.1.1.16</ecNumber>
    </recommendedName>
    <alternativeName>
        <fullName evidence="1">Cysteinyl-tRNA synthetase</fullName>
        <shortName evidence="1">CysRS</shortName>
    </alternativeName>
</protein>
<name>SYC_GLAP5</name>
<comment type="catalytic activity">
    <reaction evidence="1">
        <text>tRNA(Cys) + L-cysteine + ATP = L-cysteinyl-tRNA(Cys) + AMP + diphosphate</text>
        <dbReference type="Rhea" id="RHEA:17773"/>
        <dbReference type="Rhea" id="RHEA-COMP:9661"/>
        <dbReference type="Rhea" id="RHEA-COMP:9679"/>
        <dbReference type="ChEBI" id="CHEBI:30616"/>
        <dbReference type="ChEBI" id="CHEBI:33019"/>
        <dbReference type="ChEBI" id="CHEBI:35235"/>
        <dbReference type="ChEBI" id="CHEBI:78442"/>
        <dbReference type="ChEBI" id="CHEBI:78517"/>
        <dbReference type="ChEBI" id="CHEBI:456215"/>
        <dbReference type="EC" id="6.1.1.16"/>
    </reaction>
</comment>
<comment type="cofactor">
    <cofactor evidence="1">
        <name>Zn(2+)</name>
        <dbReference type="ChEBI" id="CHEBI:29105"/>
    </cofactor>
    <text evidence="1">Binds 1 zinc ion per subunit.</text>
</comment>
<comment type="subunit">
    <text evidence="1">Monomer.</text>
</comment>
<comment type="subcellular location">
    <subcellularLocation>
        <location evidence="1">Cytoplasm</location>
    </subcellularLocation>
</comment>
<comment type="similarity">
    <text evidence="1">Belongs to the class-I aminoacyl-tRNA synthetase family.</text>
</comment>
<evidence type="ECO:0000255" key="1">
    <source>
        <dbReference type="HAMAP-Rule" id="MF_00041"/>
    </source>
</evidence>
<proteinExistence type="inferred from homology"/>
<sequence length="459" mass="52651">MLKIYNTLKREKEEFKPIHPDHVGMYVCGVTVYDLCHFGHGRTFVSFDVIARYLRYLGYNLRYVRNITDVDDKIIKRSLENNETCDQLVDRMIIEMHKDFDALNILRPDVEPRATQHIPEIIAIVEKLLAKGHAYVAEDGDVMFNVESFQKYGALSRQNLEQLQAGARVEIKSVKRNPMDFVLWKMSKENEPSWDSPWGKGRPGWHIECSAMNSKELGNHFDIHGGGSDLMFPHHENEIAQSCCAHGDDYVNYWLHTGMLTINEEKMSKSLNNFFTIRDILNKYDCESVRYFFLTAQYRSLLDYSEENIGLARKALERLYTALRGCDWNVELVENDQYVTAFKESMDDDFNTPGALAVLFELAREVNKLKAENQAEANKLAARLKQLAGVLGLLEQDPETFLQGDANNDEVAEIEAFIKQRNEARASKNWAVADEARNKLTAMGIVLEDGANGTTWRRA</sequence>
<keyword id="KW-0030">Aminoacyl-tRNA synthetase</keyword>
<keyword id="KW-0067">ATP-binding</keyword>
<keyword id="KW-0963">Cytoplasm</keyword>
<keyword id="KW-0436">Ligase</keyword>
<keyword id="KW-0479">Metal-binding</keyword>
<keyword id="KW-0547">Nucleotide-binding</keyword>
<keyword id="KW-0648">Protein biosynthesis</keyword>
<keyword id="KW-1185">Reference proteome</keyword>
<keyword id="KW-0862">Zinc</keyword>
<feature type="chain" id="PRO_1000199072" description="Cysteine--tRNA ligase">
    <location>
        <begin position="1"/>
        <end position="459"/>
    </location>
</feature>
<feature type="short sequence motif" description="'HIGH' region">
    <location>
        <begin position="30"/>
        <end position="40"/>
    </location>
</feature>
<feature type="short sequence motif" description="'KMSKS' region">
    <location>
        <begin position="266"/>
        <end position="270"/>
    </location>
</feature>
<feature type="binding site" evidence="1">
    <location>
        <position position="28"/>
    </location>
    <ligand>
        <name>Zn(2+)</name>
        <dbReference type="ChEBI" id="CHEBI:29105"/>
    </ligand>
</feature>
<feature type="binding site" evidence="1">
    <location>
        <position position="209"/>
    </location>
    <ligand>
        <name>Zn(2+)</name>
        <dbReference type="ChEBI" id="CHEBI:29105"/>
    </ligand>
</feature>
<feature type="binding site" evidence="1">
    <location>
        <position position="234"/>
    </location>
    <ligand>
        <name>Zn(2+)</name>
        <dbReference type="ChEBI" id="CHEBI:29105"/>
    </ligand>
</feature>
<feature type="binding site" evidence="1">
    <location>
        <position position="238"/>
    </location>
    <ligand>
        <name>Zn(2+)</name>
        <dbReference type="ChEBI" id="CHEBI:29105"/>
    </ligand>
</feature>
<feature type="binding site" evidence="1">
    <location>
        <position position="269"/>
    </location>
    <ligand>
        <name>ATP</name>
        <dbReference type="ChEBI" id="CHEBI:30616"/>
    </ligand>
</feature>
<accession>B8F392</accession>
<dbReference type="EC" id="6.1.1.16" evidence="1"/>
<dbReference type="EMBL" id="CP001321">
    <property type="protein sequence ID" value="ACL31794.1"/>
    <property type="molecule type" value="Genomic_DNA"/>
</dbReference>
<dbReference type="RefSeq" id="WP_012621550.1">
    <property type="nucleotide sequence ID" value="NC_011852.1"/>
</dbReference>
<dbReference type="SMR" id="B8F392"/>
<dbReference type="STRING" id="557723.HAPS_0090"/>
<dbReference type="KEGG" id="hap:HAPS_0090"/>
<dbReference type="PATRIC" id="fig|557723.8.peg.93"/>
<dbReference type="HOGENOM" id="CLU_013528_0_1_6"/>
<dbReference type="Proteomes" id="UP000006743">
    <property type="component" value="Chromosome"/>
</dbReference>
<dbReference type="GO" id="GO:0005829">
    <property type="term" value="C:cytosol"/>
    <property type="evidence" value="ECO:0007669"/>
    <property type="project" value="TreeGrafter"/>
</dbReference>
<dbReference type="GO" id="GO:0005524">
    <property type="term" value="F:ATP binding"/>
    <property type="evidence" value="ECO:0007669"/>
    <property type="project" value="UniProtKB-UniRule"/>
</dbReference>
<dbReference type="GO" id="GO:0004817">
    <property type="term" value="F:cysteine-tRNA ligase activity"/>
    <property type="evidence" value="ECO:0007669"/>
    <property type="project" value="UniProtKB-UniRule"/>
</dbReference>
<dbReference type="GO" id="GO:0008270">
    <property type="term" value="F:zinc ion binding"/>
    <property type="evidence" value="ECO:0007669"/>
    <property type="project" value="UniProtKB-UniRule"/>
</dbReference>
<dbReference type="GO" id="GO:0006423">
    <property type="term" value="P:cysteinyl-tRNA aminoacylation"/>
    <property type="evidence" value="ECO:0007669"/>
    <property type="project" value="UniProtKB-UniRule"/>
</dbReference>
<dbReference type="CDD" id="cd07963">
    <property type="entry name" value="Anticodon_Ia_Cys"/>
    <property type="match status" value="1"/>
</dbReference>
<dbReference type="CDD" id="cd00672">
    <property type="entry name" value="CysRS_core"/>
    <property type="match status" value="1"/>
</dbReference>
<dbReference type="FunFam" id="3.40.50.620:FF:000009">
    <property type="entry name" value="Cysteine--tRNA ligase"/>
    <property type="match status" value="1"/>
</dbReference>
<dbReference type="Gene3D" id="1.20.120.1910">
    <property type="entry name" value="Cysteine-tRNA ligase, C-terminal anti-codon recognition domain"/>
    <property type="match status" value="1"/>
</dbReference>
<dbReference type="Gene3D" id="3.40.50.620">
    <property type="entry name" value="HUPs"/>
    <property type="match status" value="1"/>
</dbReference>
<dbReference type="HAMAP" id="MF_00041">
    <property type="entry name" value="Cys_tRNA_synth"/>
    <property type="match status" value="1"/>
</dbReference>
<dbReference type="InterPro" id="IPR015803">
    <property type="entry name" value="Cys-tRNA-ligase"/>
</dbReference>
<dbReference type="InterPro" id="IPR015273">
    <property type="entry name" value="Cys-tRNA-synt_Ia_DALR"/>
</dbReference>
<dbReference type="InterPro" id="IPR024909">
    <property type="entry name" value="Cys-tRNA/MSH_ligase"/>
</dbReference>
<dbReference type="InterPro" id="IPR056411">
    <property type="entry name" value="CysS_C"/>
</dbReference>
<dbReference type="InterPro" id="IPR014729">
    <property type="entry name" value="Rossmann-like_a/b/a_fold"/>
</dbReference>
<dbReference type="InterPro" id="IPR032678">
    <property type="entry name" value="tRNA-synt_1_cat_dom"/>
</dbReference>
<dbReference type="InterPro" id="IPR009080">
    <property type="entry name" value="tRNAsynth_Ia_anticodon-bd"/>
</dbReference>
<dbReference type="NCBIfam" id="TIGR00435">
    <property type="entry name" value="cysS"/>
    <property type="match status" value="1"/>
</dbReference>
<dbReference type="PANTHER" id="PTHR10890:SF3">
    <property type="entry name" value="CYSTEINE--TRNA LIGASE, CYTOPLASMIC"/>
    <property type="match status" value="1"/>
</dbReference>
<dbReference type="PANTHER" id="PTHR10890">
    <property type="entry name" value="CYSTEINYL-TRNA SYNTHETASE"/>
    <property type="match status" value="1"/>
</dbReference>
<dbReference type="Pfam" id="PF23493">
    <property type="entry name" value="CysS_C"/>
    <property type="match status" value="1"/>
</dbReference>
<dbReference type="Pfam" id="PF09190">
    <property type="entry name" value="DALR_2"/>
    <property type="match status" value="1"/>
</dbReference>
<dbReference type="Pfam" id="PF01406">
    <property type="entry name" value="tRNA-synt_1e"/>
    <property type="match status" value="1"/>
</dbReference>
<dbReference type="PRINTS" id="PR00983">
    <property type="entry name" value="TRNASYNTHCYS"/>
</dbReference>
<dbReference type="SMART" id="SM00840">
    <property type="entry name" value="DALR_2"/>
    <property type="match status" value="1"/>
</dbReference>
<dbReference type="SUPFAM" id="SSF47323">
    <property type="entry name" value="Anticodon-binding domain of a subclass of class I aminoacyl-tRNA synthetases"/>
    <property type="match status" value="1"/>
</dbReference>
<dbReference type="SUPFAM" id="SSF52374">
    <property type="entry name" value="Nucleotidylyl transferase"/>
    <property type="match status" value="1"/>
</dbReference>
<gene>
    <name evidence="1" type="primary">cysS</name>
    <name type="ordered locus">HAPS_0090</name>
</gene>
<reference key="1">
    <citation type="journal article" date="2009" name="J. Bacteriol.">
        <title>Complete genome sequence of Haemophilus parasuis SH0165.</title>
        <authorList>
            <person name="Yue M."/>
            <person name="Yang F."/>
            <person name="Yang J."/>
            <person name="Bei W."/>
            <person name="Cai X."/>
            <person name="Chen L."/>
            <person name="Dong J."/>
            <person name="Zhou R."/>
            <person name="Jin M."/>
            <person name="Jin Q."/>
            <person name="Chen H."/>
        </authorList>
    </citation>
    <scope>NUCLEOTIDE SEQUENCE [LARGE SCALE GENOMIC DNA]</scope>
    <source>
        <strain>SH0165</strain>
    </source>
</reference>